<evidence type="ECO:0000250" key="1"/>
<evidence type="ECO:0000250" key="2">
    <source>
        <dbReference type="UniProtKB" id="Q8N119"/>
    </source>
</evidence>
<evidence type="ECO:0000255" key="3"/>
<evidence type="ECO:0000255" key="4">
    <source>
        <dbReference type="PIRSR" id="PIRSR001191-1"/>
    </source>
</evidence>
<evidence type="ECO:0000255" key="5">
    <source>
        <dbReference type="PROSITE-ProRule" id="PRU01011"/>
    </source>
</evidence>
<evidence type="ECO:0000255" key="6">
    <source>
        <dbReference type="PROSITE-ProRule" id="PRU10095"/>
    </source>
</evidence>
<evidence type="ECO:0000256" key="7">
    <source>
        <dbReference type="SAM" id="MobiDB-lite"/>
    </source>
</evidence>
<evidence type="ECO:0000269" key="8">
    <source>
    </source>
</evidence>
<evidence type="ECO:0000269" key="9">
    <source>
    </source>
</evidence>
<evidence type="ECO:0000312" key="10">
    <source>
        <dbReference type="EMBL" id="ALF36875.1"/>
    </source>
</evidence>
<evidence type="ECO:0000312" key="11">
    <source>
        <dbReference type="ZFIN" id="ZDB-GENE-100226-2"/>
    </source>
</evidence>
<name>MMP21_DANRE</name>
<protein>
    <recommendedName>
        <fullName evidence="10">Matrix metallopeptidase-21</fullName>
        <shortName>MMP-21</shortName>
        <ecNumber>3.4.24.-</ecNumber>
    </recommendedName>
</protein>
<dbReference type="EC" id="3.4.24.-"/>
<dbReference type="EMBL" id="KT207790">
    <property type="protein sequence ID" value="ALF36875.1"/>
    <property type="molecule type" value="mRNA"/>
</dbReference>
<dbReference type="EMBL" id="CABZ01092162">
    <property type="status" value="NOT_ANNOTATED_CDS"/>
    <property type="molecule type" value="Genomic_DNA"/>
</dbReference>
<dbReference type="EMBL" id="CABZ01092163">
    <property type="status" value="NOT_ANNOTATED_CDS"/>
    <property type="molecule type" value="Genomic_DNA"/>
</dbReference>
<dbReference type="EMBL" id="CABZ01092164">
    <property type="status" value="NOT_ANNOTATED_CDS"/>
    <property type="molecule type" value="Genomic_DNA"/>
</dbReference>
<dbReference type="RefSeq" id="NP_001304682.1">
    <property type="nucleotide sequence ID" value="NM_001317753.1"/>
</dbReference>
<dbReference type="SMR" id="A0A0N9E2K8"/>
<dbReference type="FunCoup" id="A0A0N9E2K8">
    <property type="interactions" value="633"/>
</dbReference>
<dbReference type="STRING" id="7955.ENSDARP00000146681"/>
<dbReference type="GlyCosmos" id="A0A0N9E2K8">
    <property type="glycosylation" value="1 site, No reported glycans"/>
</dbReference>
<dbReference type="PaxDb" id="7955-ENSDARP00000101806"/>
<dbReference type="Ensembl" id="ENSDART00000188582">
    <property type="protein sequence ID" value="ENSDARP00000146681"/>
    <property type="gene ID" value="ENSDARG00000112495"/>
</dbReference>
<dbReference type="GeneID" id="100003089"/>
<dbReference type="KEGG" id="dre:100003089"/>
<dbReference type="AGR" id="ZFIN:ZDB-GENE-100226-2"/>
<dbReference type="CTD" id="118856"/>
<dbReference type="ZFIN" id="ZDB-GENE-100226-2">
    <property type="gene designation" value="mmp21"/>
</dbReference>
<dbReference type="eggNOG" id="KOG1565">
    <property type="taxonomic scope" value="Eukaryota"/>
</dbReference>
<dbReference type="InParanoid" id="A0A0N9E2K8"/>
<dbReference type="OMA" id="CWLAAPW"/>
<dbReference type="OrthoDB" id="406838at2759"/>
<dbReference type="PRO" id="PR:A0A0N9E2K8"/>
<dbReference type="Proteomes" id="UP000000437">
    <property type="component" value="Chromosome 12"/>
</dbReference>
<dbReference type="Bgee" id="ENSDARG00000112495">
    <property type="expression patterns" value="Expressed in Kupffer's vesicle and 3 other cell types or tissues"/>
</dbReference>
<dbReference type="GO" id="GO:0031012">
    <property type="term" value="C:extracellular matrix"/>
    <property type="evidence" value="ECO:0007669"/>
    <property type="project" value="InterPro"/>
</dbReference>
<dbReference type="GO" id="GO:0004222">
    <property type="term" value="F:metalloendopeptidase activity"/>
    <property type="evidence" value="ECO:0000318"/>
    <property type="project" value="GO_Central"/>
</dbReference>
<dbReference type="GO" id="GO:0008270">
    <property type="term" value="F:zinc ion binding"/>
    <property type="evidence" value="ECO:0007669"/>
    <property type="project" value="InterPro"/>
</dbReference>
<dbReference type="GO" id="GO:0030574">
    <property type="term" value="P:collagen catabolic process"/>
    <property type="evidence" value="ECO:0000318"/>
    <property type="project" value="GO_Central"/>
</dbReference>
<dbReference type="GO" id="GO:0061371">
    <property type="term" value="P:determination of heart left/right asymmetry"/>
    <property type="evidence" value="ECO:0000315"/>
    <property type="project" value="ZFIN"/>
</dbReference>
<dbReference type="GO" id="GO:0007368">
    <property type="term" value="P:determination of left/right symmetry"/>
    <property type="evidence" value="ECO:0000315"/>
    <property type="project" value="ZFIN"/>
</dbReference>
<dbReference type="GO" id="GO:0060971">
    <property type="term" value="P:embryonic heart tube left/right pattern formation"/>
    <property type="evidence" value="ECO:0000315"/>
    <property type="project" value="ZFIN"/>
</dbReference>
<dbReference type="GO" id="GO:0030198">
    <property type="term" value="P:extracellular matrix organization"/>
    <property type="evidence" value="ECO:0000318"/>
    <property type="project" value="GO_Central"/>
</dbReference>
<dbReference type="GO" id="GO:0006508">
    <property type="term" value="P:proteolysis"/>
    <property type="evidence" value="ECO:0007669"/>
    <property type="project" value="UniProtKB-KW"/>
</dbReference>
<dbReference type="GO" id="GO:1901207">
    <property type="term" value="P:regulation of heart looping"/>
    <property type="evidence" value="ECO:0000315"/>
    <property type="project" value="ZFIN"/>
</dbReference>
<dbReference type="CDD" id="cd04278">
    <property type="entry name" value="ZnMc_MMP"/>
    <property type="match status" value="1"/>
</dbReference>
<dbReference type="FunFam" id="2.110.10.10:FF:000012">
    <property type="entry name" value="Matrix metallopeptidase 21"/>
    <property type="match status" value="1"/>
</dbReference>
<dbReference type="Gene3D" id="3.40.390.10">
    <property type="entry name" value="Collagenase (Catalytic Domain)"/>
    <property type="match status" value="1"/>
</dbReference>
<dbReference type="Gene3D" id="2.110.10.10">
    <property type="entry name" value="Hemopexin-like domain"/>
    <property type="match status" value="2"/>
</dbReference>
<dbReference type="InterPro" id="IPR036375">
    <property type="entry name" value="Hemopexin-like_dom_sf"/>
</dbReference>
<dbReference type="InterPro" id="IPR018487">
    <property type="entry name" value="Hemopexin-like_repeat"/>
</dbReference>
<dbReference type="InterPro" id="IPR033739">
    <property type="entry name" value="M10A_MMP"/>
</dbReference>
<dbReference type="InterPro" id="IPR024079">
    <property type="entry name" value="MetalloPept_cat_dom_sf"/>
</dbReference>
<dbReference type="InterPro" id="IPR001818">
    <property type="entry name" value="Pept_M10_metallopeptidase"/>
</dbReference>
<dbReference type="InterPro" id="IPR021190">
    <property type="entry name" value="Pept_M10A"/>
</dbReference>
<dbReference type="InterPro" id="IPR006026">
    <property type="entry name" value="Peptidase_Metallo"/>
</dbReference>
<dbReference type="InterPro" id="IPR002477">
    <property type="entry name" value="Peptidoglycan-bd-like"/>
</dbReference>
<dbReference type="InterPro" id="IPR036365">
    <property type="entry name" value="PGBD-like_sf"/>
</dbReference>
<dbReference type="PANTHER" id="PTHR10201">
    <property type="entry name" value="MATRIX METALLOPROTEINASE"/>
    <property type="match status" value="1"/>
</dbReference>
<dbReference type="PANTHER" id="PTHR10201:SF323">
    <property type="entry name" value="MATRIX METALLOPROTEINASE-21"/>
    <property type="match status" value="1"/>
</dbReference>
<dbReference type="Pfam" id="PF00045">
    <property type="entry name" value="Hemopexin"/>
    <property type="match status" value="2"/>
</dbReference>
<dbReference type="Pfam" id="PF00413">
    <property type="entry name" value="Peptidase_M10"/>
    <property type="match status" value="1"/>
</dbReference>
<dbReference type="Pfam" id="PF01471">
    <property type="entry name" value="PG_binding_1"/>
    <property type="match status" value="1"/>
</dbReference>
<dbReference type="PIRSF" id="PIRSF001191">
    <property type="entry name" value="Peptidase_M10A_matrix"/>
    <property type="match status" value="1"/>
</dbReference>
<dbReference type="PRINTS" id="PR00138">
    <property type="entry name" value="MATRIXIN"/>
</dbReference>
<dbReference type="SMART" id="SM00120">
    <property type="entry name" value="HX"/>
    <property type="match status" value="4"/>
</dbReference>
<dbReference type="SMART" id="SM00235">
    <property type="entry name" value="ZnMc"/>
    <property type="match status" value="1"/>
</dbReference>
<dbReference type="SUPFAM" id="SSF50923">
    <property type="entry name" value="Hemopexin-like domain"/>
    <property type="match status" value="1"/>
</dbReference>
<dbReference type="SUPFAM" id="SSF55486">
    <property type="entry name" value="Metalloproteases ('zincins'), catalytic domain"/>
    <property type="match status" value="1"/>
</dbReference>
<dbReference type="SUPFAM" id="SSF47090">
    <property type="entry name" value="PGBD-like"/>
    <property type="match status" value="1"/>
</dbReference>
<dbReference type="PROSITE" id="PS51642">
    <property type="entry name" value="HEMOPEXIN_2"/>
    <property type="match status" value="4"/>
</dbReference>
<dbReference type="PROSITE" id="PS00142">
    <property type="entry name" value="ZINC_PROTEASE"/>
    <property type="match status" value="1"/>
</dbReference>
<comment type="function">
    <text evidence="8 9">Plays a specialized role in the generation of left-right asymmetry during embryogenesis. May act as a negative regulator of the NOTCH-signaling pathway.</text>
</comment>
<comment type="developmental stage">
    <text evidence="8 9">At 12 hours post-fertilization, the expression is restricted to Kupffer's vesicle.</text>
</comment>
<comment type="PTM">
    <text evidence="1">The precursor is cleaved by a furin endopeptidase.</text>
</comment>
<comment type="disruption phenotype">
    <text evidence="8 9">Morpholino knockdown of the protein results in randomnized heart looping at 48 hours post-fertilization.</text>
</comment>
<comment type="similarity">
    <text evidence="3">Belongs to the peptidase M10A family.</text>
</comment>
<feature type="signal peptide" evidence="3">
    <location>
        <begin position="1"/>
        <end position="20"/>
    </location>
</feature>
<feature type="propeptide" id="PRO_0000437090" evidence="1">
    <location>
        <begin position="21"/>
        <end position="170"/>
    </location>
</feature>
<feature type="chain" id="PRO_0000437091" description="Matrix metallopeptidase-21" evidence="2">
    <location>
        <begin position="171"/>
        <end position="599"/>
    </location>
</feature>
<feature type="repeat" description="Hemopexin 1" evidence="5">
    <location>
        <begin position="356"/>
        <end position="415"/>
    </location>
</feature>
<feature type="repeat" description="Hemopexin 2" evidence="5">
    <location>
        <begin position="417"/>
        <end position="473"/>
    </location>
</feature>
<feature type="repeat" description="Hemopexin 3" evidence="5">
    <location>
        <begin position="474"/>
        <end position="522"/>
    </location>
</feature>
<feature type="repeat" description="Hemopexin 4" evidence="5">
    <location>
        <begin position="529"/>
        <end position="585"/>
    </location>
</feature>
<feature type="region of interest" description="Disordered" evidence="7">
    <location>
        <begin position="141"/>
        <end position="170"/>
    </location>
</feature>
<feature type="compositionally biased region" description="Polar residues" evidence="7">
    <location>
        <begin position="143"/>
        <end position="159"/>
    </location>
</feature>
<feature type="active site" evidence="4">
    <location>
        <position position="310"/>
    </location>
</feature>
<feature type="binding site" description="in inhibited form" evidence="1">
    <location>
        <position position="130"/>
    </location>
    <ligand>
        <name>Zn(2+)</name>
        <dbReference type="ChEBI" id="CHEBI:29105"/>
        <note>catalytic</note>
    </ligand>
</feature>
<feature type="binding site" evidence="6">
    <location>
        <position position="309"/>
    </location>
    <ligand>
        <name>Zn(2+)</name>
        <dbReference type="ChEBI" id="CHEBI:29105"/>
        <note>catalytic</note>
    </ligand>
</feature>
<feature type="binding site" evidence="6">
    <location>
        <position position="313"/>
    </location>
    <ligand>
        <name>Zn(2+)</name>
        <dbReference type="ChEBI" id="CHEBI:29105"/>
        <note>catalytic</note>
    </ligand>
</feature>
<feature type="binding site" evidence="6">
    <location>
        <position position="319"/>
    </location>
    <ligand>
        <name>Zn(2+)</name>
        <dbReference type="ChEBI" id="CHEBI:29105"/>
        <note>catalytic</note>
    </ligand>
</feature>
<feature type="glycosylation site" description="N-linked (GlcNAc...) asparagine" evidence="3">
    <location>
        <position position="398"/>
    </location>
</feature>
<feature type="disulfide bond" evidence="1">
    <location>
        <begin position="355"/>
        <end position="586"/>
    </location>
</feature>
<feature type="sequence conflict" description="In Ref. 1; ALF36875." ref="1">
    <original>S</original>
    <variation>K</variation>
    <location>
        <position position="182"/>
    </location>
</feature>
<feature type="sequence conflict" description="In Ref. 1; ALF36875." ref="1">
    <original>K</original>
    <variation>E</variation>
    <location>
        <position position="190"/>
    </location>
</feature>
<feature type="sequence conflict" description="In Ref. 1; ALF36875." ref="1">
    <original>E</original>
    <variation>G</variation>
    <location>
        <position position="248"/>
    </location>
</feature>
<feature type="sequence conflict" description="In Ref. 1; ALF36875." ref="1">
    <original>T</original>
    <variation>M</variation>
    <location>
        <position position="356"/>
    </location>
</feature>
<feature type="sequence conflict" description="In Ref. 1; ALF36875." ref="1">
    <original>L</original>
    <variation>S</variation>
    <location>
        <position position="461"/>
    </location>
</feature>
<proteinExistence type="evidence at transcript level"/>
<gene>
    <name evidence="10 11" type="primary">mmp21</name>
</gene>
<accession>A0A0N9E2K8</accession>
<sequence length="599" mass="68911">MLTVIRRIFIIQTFIFITAEKIFHSRDHSDVLNNIHQAELITDTDTAQRFLSKYGFIKAAGSEESQLSESSGDLDFSLSLDLHEGGTTSGSSSSDLQFVSALRDFQRLSDLPVTGVFDDATKAAMNKPRCGVMDDDQELKDVTGSNSTRNHIRTSTNTSHNHEHQAPVRKKRHLSALLKNTSLQKRDVSKWTGHMAFSKSVLKWRLIGEGYSSQLSIQEQKYIFRLAFRMWSEISPLQFIEDLHSPLENIDIRLGFGTGRHLGCSQRFDGAGREFAHAWFLGDIHFDDDEHFTVPNTGSGISLLKVAVHEIGHVLGLPHIYRPGSIMQPSYLPQDAGFEIDWMDRKSIQRLYGVCTGRFSTVFDWIRKEQTPYGEVVVRFNTYFMRDGLYWLYENRNNRTRYGDPVAVQVGWHGLPSGGVDAYVHVWNRKTDAVYFFKGMQYWRYDSENDHVFSHAPDGRLYPRLISEDFPGVSGPLDTAYYDRRDAHIYFFKGSQVFRFDVRMRRLASSSPQEMTEVFPAIVSGDHPVRSLDAAYFSYTHNTVFLLKGSLFWRVLSGKERRRRAFLPMNGLLAHRRVHEQWFDICDVHSSSLRTTRRR</sequence>
<reference key="1">
    <citation type="journal article" date="2015" name="Nat. Genet.">
        <title>MMP21 is mutated in human heterotaxy and is required for normal left-right asymmetry in vertebrates.</title>
        <authorList>
            <person name="Guimier A."/>
            <person name="Gabriel G.C."/>
            <person name="Bajolle F."/>
            <person name="Tsang M."/>
            <person name="Liu H."/>
            <person name="Noll A."/>
            <person name="Schwartz M."/>
            <person name="El Malti R."/>
            <person name="Smith L.D."/>
            <person name="Klena N.T."/>
            <person name="Jimenez G."/>
            <person name="Miller N.A."/>
            <person name="Oufadem M."/>
            <person name="Moreau de Bellaing A."/>
            <person name="Yagi H."/>
            <person name="Saunders C.J."/>
            <person name="Baker C.N."/>
            <person name="Di Filippo S."/>
            <person name="Peterson K.A."/>
            <person name="Thiffault I."/>
            <person name="Bole-Feysot C."/>
            <person name="Cooley L.D."/>
            <person name="Farrow E.G."/>
            <person name="Masson C."/>
            <person name="Schoen P."/>
            <person name="Deleuze J.F."/>
            <person name="Nitschke P."/>
            <person name="Lyonnet S."/>
            <person name="de Pontual L."/>
            <person name="Murray S.A."/>
            <person name="Bonnet D."/>
            <person name="Kingsmore S.F."/>
            <person name="Amiel J."/>
            <person name="Bouvagnet P."/>
            <person name="Lo C.W."/>
            <person name="Gordon C.T."/>
        </authorList>
    </citation>
    <scope>NUCLEOTIDE SEQUENCE [MRNA]</scope>
    <scope>FUNCTION</scope>
    <scope>DISRUPTION PHENOTYPE</scope>
    <scope>DEVELOPMENTAL STAGE</scope>
</reference>
<reference key="2">
    <citation type="journal article" date="2013" name="Nature">
        <title>The zebrafish reference genome sequence and its relationship to the human genome.</title>
        <authorList>
            <person name="Howe K."/>
            <person name="Clark M.D."/>
            <person name="Torroja C.F."/>
            <person name="Torrance J."/>
            <person name="Berthelot C."/>
            <person name="Muffato M."/>
            <person name="Collins J.E."/>
            <person name="Humphray S."/>
            <person name="McLaren K."/>
            <person name="Matthews L."/>
            <person name="McLaren S."/>
            <person name="Sealy I."/>
            <person name="Caccamo M."/>
            <person name="Churcher C."/>
            <person name="Scott C."/>
            <person name="Barrett J.C."/>
            <person name="Koch R."/>
            <person name="Rauch G.J."/>
            <person name="White S."/>
            <person name="Chow W."/>
            <person name="Kilian B."/>
            <person name="Quintais L.T."/>
            <person name="Guerra-Assuncao J.A."/>
            <person name="Zhou Y."/>
            <person name="Gu Y."/>
            <person name="Yen J."/>
            <person name="Vogel J.H."/>
            <person name="Eyre T."/>
            <person name="Redmond S."/>
            <person name="Banerjee R."/>
            <person name="Chi J."/>
            <person name="Fu B."/>
            <person name="Langley E."/>
            <person name="Maguire S.F."/>
            <person name="Laird G.K."/>
            <person name="Lloyd D."/>
            <person name="Kenyon E."/>
            <person name="Donaldson S."/>
            <person name="Sehra H."/>
            <person name="Almeida-King J."/>
            <person name="Loveland J."/>
            <person name="Trevanion S."/>
            <person name="Jones M."/>
            <person name="Quail M."/>
            <person name="Willey D."/>
            <person name="Hunt A."/>
            <person name="Burton J."/>
            <person name="Sims S."/>
            <person name="McLay K."/>
            <person name="Plumb B."/>
            <person name="Davis J."/>
            <person name="Clee C."/>
            <person name="Oliver K."/>
            <person name="Clark R."/>
            <person name="Riddle C."/>
            <person name="Elliot D."/>
            <person name="Threadgold G."/>
            <person name="Harden G."/>
            <person name="Ware D."/>
            <person name="Begum S."/>
            <person name="Mortimore B."/>
            <person name="Kerry G."/>
            <person name="Heath P."/>
            <person name="Phillimore B."/>
            <person name="Tracey A."/>
            <person name="Corby N."/>
            <person name="Dunn M."/>
            <person name="Johnson C."/>
            <person name="Wood J."/>
            <person name="Clark S."/>
            <person name="Pelan S."/>
            <person name="Griffiths G."/>
            <person name="Smith M."/>
            <person name="Glithero R."/>
            <person name="Howden P."/>
            <person name="Barker N."/>
            <person name="Lloyd C."/>
            <person name="Stevens C."/>
            <person name="Harley J."/>
            <person name="Holt K."/>
            <person name="Panagiotidis G."/>
            <person name="Lovell J."/>
            <person name="Beasley H."/>
            <person name="Henderson C."/>
            <person name="Gordon D."/>
            <person name="Auger K."/>
            <person name="Wright D."/>
            <person name="Collins J."/>
            <person name="Raisen C."/>
            <person name="Dyer L."/>
            <person name="Leung K."/>
            <person name="Robertson L."/>
            <person name="Ambridge K."/>
            <person name="Leongamornlert D."/>
            <person name="McGuire S."/>
            <person name="Gilderthorp R."/>
            <person name="Griffiths C."/>
            <person name="Manthravadi D."/>
            <person name="Nichol S."/>
            <person name="Barker G."/>
            <person name="Whitehead S."/>
            <person name="Kay M."/>
            <person name="Brown J."/>
            <person name="Murnane C."/>
            <person name="Gray E."/>
            <person name="Humphries M."/>
            <person name="Sycamore N."/>
            <person name="Barker D."/>
            <person name="Saunders D."/>
            <person name="Wallis J."/>
            <person name="Babbage A."/>
            <person name="Hammond S."/>
            <person name="Mashreghi-Mohammadi M."/>
            <person name="Barr L."/>
            <person name="Martin S."/>
            <person name="Wray P."/>
            <person name="Ellington A."/>
            <person name="Matthews N."/>
            <person name="Ellwood M."/>
            <person name="Woodmansey R."/>
            <person name="Clark G."/>
            <person name="Cooper J."/>
            <person name="Tromans A."/>
            <person name="Grafham D."/>
            <person name="Skuce C."/>
            <person name="Pandian R."/>
            <person name="Andrews R."/>
            <person name="Harrison E."/>
            <person name="Kimberley A."/>
            <person name="Garnett J."/>
            <person name="Fosker N."/>
            <person name="Hall R."/>
            <person name="Garner P."/>
            <person name="Kelly D."/>
            <person name="Bird C."/>
            <person name="Palmer S."/>
            <person name="Gehring I."/>
            <person name="Berger A."/>
            <person name="Dooley C.M."/>
            <person name="Ersan-Urun Z."/>
            <person name="Eser C."/>
            <person name="Geiger H."/>
            <person name="Geisler M."/>
            <person name="Karotki L."/>
            <person name="Kirn A."/>
            <person name="Konantz J."/>
            <person name="Konantz M."/>
            <person name="Oberlander M."/>
            <person name="Rudolph-Geiger S."/>
            <person name="Teucke M."/>
            <person name="Lanz C."/>
            <person name="Raddatz G."/>
            <person name="Osoegawa K."/>
            <person name="Zhu B."/>
            <person name="Rapp A."/>
            <person name="Widaa S."/>
            <person name="Langford C."/>
            <person name="Yang F."/>
            <person name="Schuster S.C."/>
            <person name="Carter N.P."/>
            <person name="Harrow J."/>
            <person name="Ning Z."/>
            <person name="Herrero J."/>
            <person name="Searle S.M."/>
            <person name="Enright A."/>
            <person name="Geisler R."/>
            <person name="Plasterk R.H."/>
            <person name="Lee C."/>
            <person name="Westerfield M."/>
            <person name="de Jong P.J."/>
            <person name="Zon L.I."/>
            <person name="Postlethwait J.H."/>
            <person name="Nusslein-Volhard C."/>
            <person name="Hubbard T.J."/>
            <person name="Roest Crollius H."/>
            <person name="Rogers J."/>
            <person name="Stemple D.L."/>
        </authorList>
    </citation>
    <scope>NUCLEOTIDE SEQUENCE [LARGE SCALE GENOMIC DNA]</scope>
    <source>
        <strain>Tuebingen</strain>
    </source>
</reference>
<reference key="3">
    <citation type="journal article" date="2015" name="J. Med. Genet.">
        <title>A human laterality disorder caused by a homozygous deleterious mutation in MMP21.</title>
        <authorList>
            <person name="Perles Z."/>
            <person name="Moon S."/>
            <person name="Ta-Shma A."/>
            <person name="Yaacov B."/>
            <person name="Francescatto L."/>
            <person name="Edvardson S."/>
            <person name="Rein A.J."/>
            <person name="Elpeleg O."/>
            <person name="Katsanis N."/>
        </authorList>
    </citation>
    <scope>FUNCTION</scope>
    <scope>DISRUPTION PHENOTYPE</scope>
    <scope>DEVELOPMENTAL STAGE</scope>
</reference>
<organism>
    <name type="scientific">Danio rerio</name>
    <name type="common">Zebrafish</name>
    <name type="synonym">Brachydanio rerio</name>
    <dbReference type="NCBI Taxonomy" id="7955"/>
    <lineage>
        <taxon>Eukaryota</taxon>
        <taxon>Metazoa</taxon>
        <taxon>Chordata</taxon>
        <taxon>Craniata</taxon>
        <taxon>Vertebrata</taxon>
        <taxon>Euteleostomi</taxon>
        <taxon>Actinopterygii</taxon>
        <taxon>Neopterygii</taxon>
        <taxon>Teleostei</taxon>
        <taxon>Ostariophysi</taxon>
        <taxon>Cypriniformes</taxon>
        <taxon>Danionidae</taxon>
        <taxon>Danioninae</taxon>
        <taxon>Danio</taxon>
    </lineage>
</organism>
<keyword id="KW-0106">Calcium</keyword>
<keyword id="KW-1015">Disulfide bond</keyword>
<keyword id="KW-0325">Glycoprotein</keyword>
<keyword id="KW-0378">Hydrolase</keyword>
<keyword id="KW-0479">Metal-binding</keyword>
<keyword id="KW-0482">Metalloprotease</keyword>
<keyword id="KW-0645">Protease</keyword>
<keyword id="KW-1185">Reference proteome</keyword>
<keyword id="KW-0677">Repeat</keyword>
<keyword id="KW-0732">Signal</keyword>
<keyword id="KW-0862">Zinc</keyword>